<dbReference type="EC" id="7.1.2.2" evidence="1"/>
<dbReference type="EMBL" id="CP000605">
    <property type="protein sequence ID" value="ACD98571.1"/>
    <property type="molecule type" value="Genomic_DNA"/>
</dbReference>
<dbReference type="RefSeq" id="WP_007051480.1">
    <property type="nucleotide sequence ID" value="NZ_AABM02000027.1"/>
</dbReference>
<dbReference type="SMR" id="B3DTV2"/>
<dbReference type="GeneID" id="69577497"/>
<dbReference type="KEGG" id="blj:BLD_1125"/>
<dbReference type="HOGENOM" id="CLU_010091_2_1_11"/>
<dbReference type="Proteomes" id="UP000002419">
    <property type="component" value="Chromosome"/>
</dbReference>
<dbReference type="GO" id="GO:0005886">
    <property type="term" value="C:plasma membrane"/>
    <property type="evidence" value="ECO:0007669"/>
    <property type="project" value="UniProtKB-SubCell"/>
</dbReference>
<dbReference type="GO" id="GO:0045259">
    <property type="term" value="C:proton-transporting ATP synthase complex"/>
    <property type="evidence" value="ECO:0007669"/>
    <property type="project" value="UniProtKB-KW"/>
</dbReference>
<dbReference type="GO" id="GO:0043531">
    <property type="term" value="F:ADP binding"/>
    <property type="evidence" value="ECO:0007669"/>
    <property type="project" value="TreeGrafter"/>
</dbReference>
<dbReference type="GO" id="GO:0005524">
    <property type="term" value="F:ATP binding"/>
    <property type="evidence" value="ECO:0007669"/>
    <property type="project" value="UniProtKB-UniRule"/>
</dbReference>
<dbReference type="GO" id="GO:0046933">
    <property type="term" value="F:proton-transporting ATP synthase activity, rotational mechanism"/>
    <property type="evidence" value="ECO:0007669"/>
    <property type="project" value="UniProtKB-UniRule"/>
</dbReference>
<dbReference type="CDD" id="cd18113">
    <property type="entry name" value="ATP-synt_F1_alpha_C"/>
    <property type="match status" value="1"/>
</dbReference>
<dbReference type="CDD" id="cd18116">
    <property type="entry name" value="ATP-synt_F1_alpha_N"/>
    <property type="match status" value="1"/>
</dbReference>
<dbReference type="CDD" id="cd01132">
    <property type="entry name" value="F1-ATPase_alpha_CD"/>
    <property type="match status" value="1"/>
</dbReference>
<dbReference type="FunFam" id="1.20.150.20:FF:000001">
    <property type="entry name" value="ATP synthase subunit alpha"/>
    <property type="match status" value="1"/>
</dbReference>
<dbReference type="FunFam" id="3.40.50.300:FF:000002">
    <property type="entry name" value="ATP synthase subunit alpha"/>
    <property type="match status" value="1"/>
</dbReference>
<dbReference type="Gene3D" id="2.40.30.20">
    <property type="match status" value="1"/>
</dbReference>
<dbReference type="Gene3D" id="1.20.150.20">
    <property type="entry name" value="ATP synthase alpha/beta chain, C-terminal domain"/>
    <property type="match status" value="1"/>
</dbReference>
<dbReference type="Gene3D" id="3.40.50.300">
    <property type="entry name" value="P-loop containing nucleotide triphosphate hydrolases"/>
    <property type="match status" value="1"/>
</dbReference>
<dbReference type="HAMAP" id="MF_01346">
    <property type="entry name" value="ATP_synth_alpha_bact"/>
    <property type="match status" value="1"/>
</dbReference>
<dbReference type="InterPro" id="IPR023366">
    <property type="entry name" value="ATP_synth_asu-like_sf"/>
</dbReference>
<dbReference type="InterPro" id="IPR000793">
    <property type="entry name" value="ATP_synth_asu_C"/>
</dbReference>
<dbReference type="InterPro" id="IPR038376">
    <property type="entry name" value="ATP_synth_asu_C_sf"/>
</dbReference>
<dbReference type="InterPro" id="IPR033732">
    <property type="entry name" value="ATP_synth_F1_a_nt-bd_dom"/>
</dbReference>
<dbReference type="InterPro" id="IPR005294">
    <property type="entry name" value="ATP_synth_F1_asu"/>
</dbReference>
<dbReference type="InterPro" id="IPR020003">
    <property type="entry name" value="ATPase_a/bsu_AS"/>
</dbReference>
<dbReference type="InterPro" id="IPR004100">
    <property type="entry name" value="ATPase_F1/V1/A1_a/bsu_N"/>
</dbReference>
<dbReference type="InterPro" id="IPR036121">
    <property type="entry name" value="ATPase_F1/V1/A1_a/bsu_N_sf"/>
</dbReference>
<dbReference type="InterPro" id="IPR000194">
    <property type="entry name" value="ATPase_F1/V1/A1_a/bsu_nucl-bd"/>
</dbReference>
<dbReference type="InterPro" id="IPR027417">
    <property type="entry name" value="P-loop_NTPase"/>
</dbReference>
<dbReference type="NCBIfam" id="TIGR00962">
    <property type="entry name" value="atpA"/>
    <property type="match status" value="1"/>
</dbReference>
<dbReference type="NCBIfam" id="NF009884">
    <property type="entry name" value="PRK13343.1"/>
    <property type="match status" value="1"/>
</dbReference>
<dbReference type="PANTHER" id="PTHR48082">
    <property type="entry name" value="ATP SYNTHASE SUBUNIT ALPHA, MITOCHONDRIAL"/>
    <property type="match status" value="1"/>
</dbReference>
<dbReference type="PANTHER" id="PTHR48082:SF2">
    <property type="entry name" value="ATP SYNTHASE SUBUNIT ALPHA, MITOCHONDRIAL"/>
    <property type="match status" value="1"/>
</dbReference>
<dbReference type="Pfam" id="PF00006">
    <property type="entry name" value="ATP-synt_ab"/>
    <property type="match status" value="1"/>
</dbReference>
<dbReference type="Pfam" id="PF00306">
    <property type="entry name" value="ATP-synt_ab_C"/>
    <property type="match status" value="1"/>
</dbReference>
<dbReference type="Pfam" id="PF02874">
    <property type="entry name" value="ATP-synt_ab_N"/>
    <property type="match status" value="1"/>
</dbReference>
<dbReference type="SUPFAM" id="SSF47917">
    <property type="entry name" value="C-terminal domain of alpha and beta subunits of F1 ATP synthase"/>
    <property type="match status" value="1"/>
</dbReference>
<dbReference type="SUPFAM" id="SSF50615">
    <property type="entry name" value="N-terminal domain of alpha and beta subunits of F1 ATP synthase"/>
    <property type="match status" value="1"/>
</dbReference>
<dbReference type="SUPFAM" id="SSF52540">
    <property type="entry name" value="P-loop containing nucleoside triphosphate hydrolases"/>
    <property type="match status" value="1"/>
</dbReference>
<dbReference type="PROSITE" id="PS00152">
    <property type="entry name" value="ATPASE_ALPHA_BETA"/>
    <property type="match status" value="1"/>
</dbReference>
<comment type="function">
    <text evidence="1">Produces ATP from ADP in the presence of a proton gradient across the membrane. The alpha chain is a regulatory subunit.</text>
</comment>
<comment type="catalytic activity">
    <reaction evidence="1">
        <text>ATP + H2O + 4 H(+)(in) = ADP + phosphate + 5 H(+)(out)</text>
        <dbReference type="Rhea" id="RHEA:57720"/>
        <dbReference type="ChEBI" id="CHEBI:15377"/>
        <dbReference type="ChEBI" id="CHEBI:15378"/>
        <dbReference type="ChEBI" id="CHEBI:30616"/>
        <dbReference type="ChEBI" id="CHEBI:43474"/>
        <dbReference type="ChEBI" id="CHEBI:456216"/>
        <dbReference type="EC" id="7.1.2.2"/>
    </reaction>
</comment>
<comment type="subunit">
    <text evidence="1">F-type ATPases have 2 components, CF(1) - the catalytic core - and CF(0) - the membrane proton channel. CF(1) has five subunits: alpha(3), beta(3), gamma(1), delta(1), epsilon(1). CF(0) has three main subunits: a(1), b(2) and c(9-12). The alpha and beta chains form an alternating ring which encloses part of the gamma chain. CF(1) is attached to CF(0) by a central stalk formed by the gamma and epsilon chains, while a peripheral stalk is formed by the delta and b chains.</text>
</comment>
<comment type="subcellular location">
    <subcellularLocation>
        <location evidence="1">Cell membrane</location>
        <topology evidence="1">Peripheral membrane protein</topology>
    </subcellularLocation>
</comment>
<comment type="similarity">
    <text evidence="1">Belongs to the ATPase alpha/beta chains family.</text>
</comment>
<proteinExistence type="inferred from homology"/>
<organism>
    <name type="scientific">Bifidobacterium longum (strain DJO10A)</name>
    <dbReference type="NCBI Taxonomy" id="205913"/>
    <lineage>
        <taxon>Bacteria</taxon>
        <taxon>Bacillati</taxon>
        <taxon>Actinomycetota</taxon>
        <taxon>Actinomycetes</taxon>
        <taxon>Bifidobacteriales</taxon>
        <taxon>Bifidobacteriaceae</taxon>
        <taxon>Bifidobacterium</taxon>
    </lineage>
</organism>
<evidence type="ECO:0000255" key="1">
    <source>
        <dbReference type="HAMAP-Rule" id="MF_01346"/>
    </source>
</evidence>
<evidence type="ECO:0000256" key="2">
    <source>
        <dbReference type="SAM" id="MobiDB-lite"/>
    </source>
</evidence>
<reference key="1">
    <citation type="journal article" date="2008" name="BMC Genomics">
        <title>Comparative genomic analysis of the gut bacterium Bifidobacterium longum reveals loci susceptible to deletion during pure culture growth.</title>
        <authorList>
            <person name="Lee J.H."/>
            <person name="Karamychev V.N."/>
            <person name="Kozyavkin S.A."/>
            <person name="Mills D."/>
            <person name="Pavlov A.R."/>
            <person name="Pavlova N.V."/>
            <person name="Polouchine N.N."/>
            <person name="Richardson P.M."/>
            <person name="Shakhova V.V."/>
            <person name="Slesarev A.I."/>
            <person name="Weimer B."/>
            <person name="O'Sullivan D.J."/>
        </authorList>
    </citation>
    <scope>NUCLEOTIDE SEQUENCE [LARGE SCALE GENOMIC DNA]</scope>
    <source>
        <strain>DJO10A</strain>
    </source>
</reference>
<accession>B3DTV2</accession>
<sequence>MAELTIDPASIRKALDDFVSSYKPSDTPTQEVGYVATAGDGIAHVTGLPGCMANELLTFEDGTLGLAFNLDAREIGVVILGDFAGIEEGQEVRRTGEVLSVPVGDGYLGRVVDPLGKPLDGLGEIQGIEGRRILEAQAPDVMHRHPVDEPLSTGLKAIDAMTPIGRGQRQLIIGDRQTGKTAIAIDTIINQKANWESGDPKKQVRCIYVAIGQKGSTIASVKQSLEDAGAMEYTTIVASPAADSAGFKYIAPYTGSAIGQHWMYNGKHVLIVFDDLSKQAEAYRSISLLLRRPPGREAYPGDVFYLHSRLLERCAKVSDDLGGGSMTGLPIVETKANDVSAYIPTNVISITDGQIFLQSDLFNANQRPAVDVGISVSRVGGAAQTKALKKVSGTLKISLAQYRSLESFAMFASDLDAASKAQLTRGAHLTELLKQPQFHPYSPEQEVVSVWTGTHGKLDDLDLKDVLPFEQGLLDYIDHNTDILKTIRETEEFTADTEAALDKAVDEFRSTFVSSAGKPLVEKKPDVDKAAPVDQEKIVAGEK</sequence>
<keyword id="KW-0066">ATP synthesis</keyword>
<keyword id="KW-0067">ATP-binding</keyword>
<keyword id="KW-1003">Cell membrane</keyword>
<keyword id="KW-0139">CF(1)</keyword>
<keyword id="KW-0375">Hydrogen ion transport</keyword>
<keyword id="KW-0406">Ion transport</keyword>
<keyword id="KW-0472">Membrane</keyword>
<keyword id="KW-0547">Nucleotide-binding</keyword>
<keyword id="KW-1278">Translocase</keyword>
<keyword id="KW-0813">Transport</keyword>
<protein>
    <recommendedName>
        <fullName evidence="1">ATP synthase subunit alpha</fullName>
        <ecNumber evidence="1">7.1.2.2</ecNumber>
    </recommendedName>
    <alternativeName>
        <fullName evidence="1">ATP synthase F1 sector subunit alpha</fullName>
    </alternativeName>
    <alternativeName>
        <fullName evidence="1">F-ATPase subunit alpha</fullName>
    </alternativeName>
</protein>
<name>ATPA_BIFLD</name>
<feature type="chain" id="PRO_1000143346" description="ATP synthase subunit alpha">
    <location>
        <begin position="1"/>
        <end position="543"/>
    </location>
</feature>
<feature type="region of interest" description="Disordered" evidence="2">
    <location>
        <begin position="521"/>
        <end position="543"/>
    </location>
</feature>
<feature type="binding site" evidence="1">
    <location>
        <begin position="174"/>
        <end position="181"/>
    </location>
    <ligand>
        <name>ATP</name>
        <dbReference type="ChEBI" id="CHEBI:30616"/>
    </ligand>
</feature>
<feature type="site" description="Required for activity" evidence="1">
    <location>
        <position position="375"/>
    </location>
</feature>
<gene>
    <name evidence="1" type="primary">atpA</name>
    <name type="ordered locus">BLD_1125</name>
</gene>